<organism>
    <name type="scientific">Burkholderia pseudomallei (strain 1710b)</name>
    <dbReference type="NCBI Taxonomy" id="320372"/>
    <lineage>
        <taxon>Bacteria</taxon>
        <taxon>Pseudomonadati</taxon>
        <taxon>Pseudomonadota</taxon>
        <taxon>Betaproteobacteria</taxon>
        <taxon>Burkholderiales</taxon>
        <taxon>Burkholderiaceae</taxon>
        <taxon>Burkholderia</taxon>
        <taxon>pseudomallei group</taxon>
    </lineage>
</organism>
<name>RL5_BURP1</name>
<protein>
    <recommendedName>
        <fullName evidence="1">Large ribosomal subunit protein uL5</fullName>
    </recommendedName>
    <alternativeName>
        <fullName evidence="2">50S ribosomal protein L5</fullName>
    </alternativeName>
</protein>
<evidence type="ECO:0000255" key="1">
    <source>
        <dbReference type="HAMAP-Rule" id="MF_01333"/>
    </source>
</evidence>
<evidence type="ECO:0000305" key="2"/>
<comment type="function">
    <text evidence="1">This is one of the proteins that bind and probably mediate the attachment of the 5S RNA into the large ribosomal subunit, where it forms part of the central protuberance. In the 70S ribosome it contacts protein S13 of the 30S subunit (bridge B1b), connecting the 2 subunits; this bridge is implicated in subunit movement. Contacts the P site tRNA; the 5S rRNA and some of its associated proteins might help stabilize positioning of ribosome-bound tRNAs.</text>
</comment>
<comment type="subunit">
    <text evidence="1">Part of the 50S ribosomal subunit; part of the 5S rRNA/L5/L18/L25 subcomplex. Contacts the 5S rRNA and the P site tRNA. Forms a bridge to the 30S subunit in the 70S ribosome.</text>
</comment>
<comment type="similarity">
    <text evidence="1">Belongs to the universal ribosomal protein uL5 family.</text>
</comment>
<sequence length="179" mass="20027">MARFQEFYKEKVVPGLIEKFGYKSVMEVPRITKITLNMGLGEAVADKKIIENAVGDLTKIAGQKPVVTKARKAIAGFKIRQGYPIGAMVTLRGRAMYEFLDRFVTVALPRVRDFRGVSGRAFDGRGNYNIGVKEQIIFPEIDYDKIDALRGLNISITTTAKTDDEAKALLASFKFPFRN</sequence>
<dbReference type="EMBL" id="CP000124">
    <property type="protein sequence ID" value="ABA51125.1"/>
    <property type="molecule type" value="Genomic_DNA"/>
</dbReference>
<dbReference type="RefSeq" id="WP_004202757.1">
    <property type="nucleotide sequence ID" value="NC_007434.1"/>
</dbReference>
<dbReference type="SMR" id="Q3JMS5"/>
<dbReference type="EnsemblBacteria" id="ABA51125">
    <property type="protein sequence ID" value="ABA51125"/>
    <property type="gene ID" value="BURPS1710b_3764"/>
</dbReference>
<dbReference type="GeneID" id="93061820"/>
<dbReference type="KEGG" id="bpm:BURPS1710b_3764"/>
<dbReference type="HOGENOM" id="CLU_061015_2_1_4"/>
<dbReference type="Proteomes" id="UP000002700">
    <property type="component" value="Chromosome I"/>
</dbReference>
<dbReference type="GO" id="GO:1990904">
    <property type="term" value="C:ribonucleoprotein complex"/>
    <property type="evidence" value="ECO:0007669"/>
    <property type="project" value="UniProtKB-KW"/>
</dbReference>
<dbReference type="GO" id="GO:0005840">
    <property type="term" value="C:ribosome"/>
    <property type="evidence" value="ECO:0007669"/>
    <property type="project" value="UniProtKB-KW"/>
</dbReference>
<dbReference type="GO" id="GO:0019843">
    <property type="term" value="F:rRNA binding"/>
    <property type="evidence" value="ECO:0007669"/>
    <property type="project" value="UniProtKB-UniRule"/>
</dbReference>
<dbReference type="GO" id="GO:0003735">
    <property type="term" value="F:structural constituent of ribosome"/>
    <property type="evidence" value="ECO:0007669"/>
    <property type="project" value="InterPro"/>
</dbReference>
<dbReference type="GO" id="GO:0000049">
    <property type="term" value="F:tRNA binding"/>
    <property type="evidence" value="ECO:0007669"/>
    <property type="project" value="UniProtKB-UniRule"/>
</dbReference>
<dbReference type="GO" id="GO:0006412">
    <property type="term" value="P:translation"/>
    <property type="evidence" value="ECO:0007669"/>
    <property type="project" value="UniProtKB-UniRule"/>
</dbReference>
<dbReference type="FunFam" id="3.30.1440.10:FF:000001">
    <property type="entry name" value="50S ribosomal protein L5"/>
    <property type="match status" value="1"/>
</dbReference>
<dbReference type="Gene3D" id="3.30.1440.10">
    <property type="match status" value="1"/>
</dbReference>
<dbReference type="HAMAP" id="MF_01333_B">
    <property type="entry name" value="Ribosomal_uL5_B"/>
    <property type="match status" value="1"/>
</dbReference>
<dbReference type="InterPro" id="IPR002132">
    <property type="entry name" value="Ribosomal_uL5"/>
</dbReference>
<dbReference type="InterPro" id="IPR020930">
    <property type="entry name" value="Ribosomal_uL5_bac-type"/>
</dbReference>
<dbReference type="InterPro" id="IPR031309">
    <property type="entry name" value="Ribosomal_uL5_C"/>
</dbReference>
<dbReference type="InterPro" id="IPR020929">
    <property type="entry name" value="Ribosomal_uL5_CS"/>
</dbReference>
<dbReference type="InterPro" id="IPR022803">
    <property type="entry name" value="Ribosomal_uL5_dom_sf"/>
</dbReference>
<dbReference type="InterPro" id="IPR031310">
    <property type="entry name" value="Ribosomal_uL5_N"/>
</dbReference>
<dbReference type="NCBIfam" id="NF000585">
    <property type="entry name" value="PRK00010.1"/>
    <property type="match status" value="1"/>
</dbReference>
<dbReference type="PANTHER" id="PTHR11994">
    <property type="entry name" value="60S RIBOSOMAL PROTEIN L11-RELATED"/>
    <property type="match status" value="1"/>
</dbReference>
<dbReference type="Pfam" id="PF00281">
    <property type="entry name" value="Ribosomal_L5"/>
    <property type="match status" value="1"/>
</dbReference>
<dbReference type="Pfam" id="PF00673">
    <property type="entry name" value="Ribosomal_L5_C"/>
    <property type="match status" value="1"/>
</dbReference>
<dbReference type="PIRSF" id="PIRSF002161">
    <property type="entry name" value="Ribosomal_L5"/>
    <property type="match status" value="1"/>
</dbReference>
<dbReference type="SUPFAM" id="SSF55282">
    <property type="entry name" value="RL5-like"/>
    <property type="match status" value="1"/>
</dbReference>
<dbReference type="PROSITE" id="PS00358">
    <property type="entry name" value="RIBOSOMAL_L5"/>
    <property type="match status" value="1"/>
</dbReference>
<keyword id="KW-0687">Ribonucleoprotein</keyword>
<keyword id="KW-0689">Ribosomal protein</keyword>
<keyword id="KW-0694">RNA-binding</keyword>
<keyword id="KW-0699">rRNA-binding</keyword>
<keyword id="KW-0820">tRNA-binding</keyword>
<reference key="1">
    <citation type="journal article" date="2010" name="Genome Biol. Evol.">
        <title>Continuing evolution of Burkholderia mallei through genome reduction and large-scale rearrangements.</title>
        <authorList>
            <person name="Losada L."/>
            <person name="Ronning C.M."/>
            <person name="DeShazer D."/>
            <person name="Woods D."/>
            <person name="Fedorova N."/>
            <person name="Kim H.S."/>
            <person name="Shabalina S.A."/>
            <person name="Pearson T.R."/>
            <person name="Brinkac L."/>
            <person name="Tan P."/>
            <person name="Nandi T."/>
            <person name="Crabtree J."/>
            <person name="Badger J."/>
            <person name="Beckstrom-Sternberg S."/>
            <person name="Saqib M."/>
            <person name="Schutzer S.E."/>
            <person name="Keim P."/>
            <person name="Nierman W.C."/>
        </authorList>
    </citation>
    <scope>NUCLEOTIDE SEQUENCE [LARGE SCALE GENOMIC DNA]</scope>
    <source>
        <strain>1710b</strain>
    </source>
</reference>
<proteinExistence type="inferred from homology"/>
<feature type="chain" id="PRO_0000242980" description="Large ribosomal subunit protein uL5">
    <location>
        <begin position="1"/>
        <end position="179"/>
    </location>
</feature>
<gene>
    <name evidence="1" type="primary">rplE</name>
    <name type="ordered locus">BURPS1710b_3764</name>
</gene>
<accession>Q3JMS5</accession>